<proteinExistence type="inferred from homology"/>
<reference key="1">
    <citation type="submission" date="2008-04" db="EMBL/GenBank/DDBJ databases">
        <title>Complete sequence of Yersinia pseudotuberculosis PB1/+.</title>
        <authorList>
            <person name="Copeland A."/>
            <person name="Lucas S."/>
            <person name="Lapidus A."/>
            <person name="Glavina del Rio T."/>
            <person name="Dalin E."/>
            <person name="Tice H."/>
            <person name="Bruce D."/>
            <person name="Goodwin L."/>
            <person name="Pitluck S."/>
            <person name="Munk A.C."/>
            <person name="Brettin T."/>
            <person name="Detter J.C."/>
            <person name="Han C."/>
            <person name="Tapia R."/>
            <person name="Schmutz J."/>
            <person name="Larimer F."/>
            <person name="Land M."/>
            <person name="Hauser L."/>
            <person name="Challacombe J.F."/>
            <person name="Green L."/>
            <person name="Lindler L.E."/>
            <person name="Nikolich M.P."/>
            <person name="Richardson P."/>
        </authorList>
    </citation>
    <scope>NUCLEOTIDE SEQUENCE [LARGE SCALE GENOMIC DNA]</scope>
    <source>
        <strain>PB1/+</strain>
    </source>
</reference>
<accession>B2K4K0</accession>
<gene>
    <name evidence="1" type="primary">rnfC</name>
    <name type="ordered locus">YPTS_2235</name>
</gene>
<name>RNFC_YERPB</name>
<protein>
    <recommendedName>
        <fullName evidence="1">Ion-translocating oxidoreductase complex subunit C</fullName>
        <ecNumber evidence="1">7.-.-.-</ecNumber>
    </recommendedName>
    <alternativeName>
        <fullName evidence="1">Rnf electron transport complex subunit C</fullName>
    </alternativeName>
</protein>
<feature type="chain" id="PRO_1000125370" description="Ion-translocating oxidoreductase complex subunit C">
    <location>
        <begin position="1"/>
        <end position="659"/>
    </location>
</feature>
<feature type="domain" description="4Fe-4S ferredoxin-type 1" evidence="1">
    <location>
        <begin position="366"/>
        <end position="397"/>
    </location>
</feature>
<feature type="domain" description="4Fe-4S ferredoxin-type 2" evidence="1">
    <location>
        <begin position="407"/>
        <end position="436"/>
    </location>
</feature>
<feature type="binding site" evidence="1">
    <location>
        <position position="377"/>
    </location>
    <ligand>
        <name>[4Fe-4S] cluster</name>
        <dbReference type="ChEBI" id="CHEBI:49883"/>
        <label>1</label>
    </ligand>
</feature>
<feature type="binding site" evidence="1">
    <location>
        <position position="380"/>
    </location>
    <ligand>
        <name>[4Fe-4S] cluster</name>
        <dbReference type="ChEBI" id="CHEBI:49883"/>
        <label>1</label>
    </ligand>
</feature>
<feature type="binding site" evidence="1">
    <location>
        <position position="383"/>
    </location>
    <ligand>
        <name>[4Fe-4S] cluster</name>
        <dbReference type="ChEBI" id="CHEBI:49883"/>
        <label>1</label>
    </ligand>
</feature>
<feature type="binding site" evidence="1">
    <location>
        <position position="387"/>
    </location>
    <ligand>
        <name>[4Fe-4S] cluster</name>
        <dbReference type="ChEBI" id="CHEBI:49883"/>
        <label>2</label>
    </ligand>
</feature>
<feature type="binding site" evidence="1">
    <location>
        <position position="416"/>
    </location>
    <ligand>
        <name>[4Fe-4S] cluster</name>
        <dbReference type="ChEBI" id="CHEBI:49883"/>
        <label>2</label>
    </ligand>
</feature>
<feature type="binding site" evidence="1">
    <location>
        <position position="419"/>
    </location>
    <ligand>
        <name>[4Fe-4S] cluster</name>
        <dbReference type="ChEBI" id="CHEBI:49883"/>
        <label>2</label>
    </ligand>
</feature>
<feature type="binding site" evidence="1">
    <location>
        <position position="422"/>
    </location>
    <ligand>
        <name>[4Fe-4S] cluster</name>
        <dbReference type="ChEBI" id="CHEBI:49883"/>
        <label>2</label>
    </ligand>
</feature>
<feature type="binding site" evidence="1">
    <location>
        <position position="426"/>
    </location>
    <ligand>
        <name>[4Fe-4S] cluster</name>
        <dbReference type="ChEBI" id="CHEBI:49883"/>
        <label>1</label>
    </ligand>
</feature>
<dbReference type="EC" id="7.-.-.-" evidence="1"/>
<dbReference type="EMBL" id="CP001048">
    <property type="protein sequence ID" value="ACC89196.1"/>
    <property type="molecule type" value="Genomic_DNA"/>
</dbReference>
<dbReference type="SMR" id="B2K4K0"/>
<dbReference type="KEGG" id="ypb:YPTS_2235"/>
<dbReference type="PATRIC" id="fig|502801.10.peg.1627"/>
<dbReference type="GO" id="GO:0005886">
    <property type="term" value="C:plasma membrane"/>
    <property type="evidence" value="ECO:0007669"/>
    <property type="project" value="UniProtKB-SubCell"/>
</dbReference>
<dbReference type="GO" id="GO:0051539">
    <property type="term" value="F:4 iron, 4 sulfur cluster binding"/>
    <property type="evidence" value="ECO:0007669"/>
    <property type="project" value="UniProtKB-KW"/>
</dbReference>
<dbReference type="GO" id="GO:0009055">
    <property type="term" value="F:electron transfer activity"/>
    <property type="evidence" value="ECO:0007669"/>
    <property type="project" value="InterPro"/>
</dbReference>
<dbReference type="GO" id="GO:0046872">
    <property type="term" value="F:metal ion binding"/>
    <property type="evidence" value="ECO:0007669"/>
    <property type="project" value="UniProtKB-KW"/>
</dbReference>
<dbReference type="GO" id="GO:0022900">
    <property type="term" value="P:electron transport chain"/>
    <property type="evidence" value="ECO:0007669"/>
    <property type="project" value="UniProtKB-UniRule"/>
</dbReference>
<dbReference type="Gene3D" id="3.30.70.20">
    <property type="match status" value="1"/>
</dbReference>
<dbReference type="Gene3D" id="3.40.50.11540">
    <property type="entry name" value="NADH-ubiquinone oxidoreductase 51kDa subunit"/>
    <property type="match status" value="1"/>
</dbReference>
<dbReference type="HAMAP" id="MF_00461">
    <property type="entry name" value="RsxC_RnfC"/>
    <property type="match status" value="1"/>
</dbReference>
<dbReference type="InterPro" id="IPR017896">
    <property type="entry name" value="4Fe4S_Fe-S-bd"/>
</dbReference>
<dbReference type="InterPro" id="IPR017900">
    <property type="entry name" value="4Fe4S_Fe_S_CS"/>
</dbReference>
<dbReference type="InterPro" id="IPR010208">
    <property type="entry name" value="Ion_transpt_RnfC/RsxC"/>
</dbReference>
<dbReference type="InterPro" id="IPR011538">
    <property type="entry name" value="Nuo51_FMN-bd"/>
</dbReference>
<dbReference type="InterPro" id="IPR037225">
    <property type="entry name" value="Nuo51_FMN-bd_sf"/>
</dbReference>
<dbReference type="InterPro" id="IPR026902">
    <property type="entry name" value="RnfC_N"/>
</dbReference>
<dbReference type="InterPro" id="IPR019554">
    <property type="entry name" value="Soluble_ligand-bd"/>
</dbReference>
<dbReference type="NCBIfam" id="NF003454">
    <property type="entry name" value="PRK05035.1"/>
    <property type="match status" value="1"/>
</dbReference>
<dbReference type="NCBIfam" id="TIGR01945">
    <property type="entry name" value="rnfC"/>
    <property type="match status" value="1"/>
</dbReference>
<dbReference type="PANTHER" id="PTHR43034">
    <property type="entry name" value="ION-TRANSLOCATING OXIDOREDUCTASE COMPLEX SUBUNIT C"/>
    <property type="match status" value="1"/>
</dbReference>
<dbReference type="PANTHER" id="PTHR43034:SF2">
    <property type="entry name" value="ION-TRANSLOCATING OXIDOREDUCTASE COMPLEX SUBUNIT C"/>
    <property type="match status" value="1"/>
</dbReference>
<dbReference type="Pfam" id="PF01512">
    <property type="entry name" value="Complex1_51K"/>
    <property type="match status" value="1"/>
</dbReference>
<dbReference type="Pfam" id="PF12838">
    <property type="entry name" value="Fer4_7"/>
    <property type="match status" value="1"/>
</dbReference>
<dbReference type="Pfam" id="PF13375">
    <property type="entry name" value="RnfC_N"/>
    <property type="match status" value="1"/>
</dbReference>
<dbReference type="Pfam" id="PF10531">
    <property type="entry name" value="SLBB"/>
    <property type="match status" value="1"/>
</dbReference>
<dbReference type="SUPFAM" id="SSF46548">
    <property type="entry name" value="alpha-helical ferredoxin"/>
    <property type="match status" value="1"/>
</dbReference>
<dbReference type="SUPFAM" id="SSF142019">
    <property type="entry name" value="Nqo1 FMN-binding domain-like"/>
    <property type="match status" value="1"/>
</dbReference>
<dbReference type="PROSITE" id="PS00198">
    <property type="entry name" value="4FE4S_FER_1"/>
    <property type="match status" value="2"/>
</dbReference>
<dbReference type="PROSITE" id="PS51379">
    <property type="entry name" value="4FE4S_FER_2"/>
    <property type="match status" value="2"/>
</dbReference>
<comment type="function">
    <text evidence="1">Part of a membrane-bound complex that couples electron transfer with translocation of ions across the membrane.</text>
</comment>
<comment type="cofactor">
    <cofactor evidence="1">
        <name>[4Fe-4S] cluster</name>
        <dbReference type="ChEBI" id="CHEBI:49883"/>
    </cofactor>
    <text evidence="1">Binds 2 [4Fe-4S] clusters per subunit.</text>
</comment>
<comment type="subunit">
    <text evidence="1">The complex is composed of six subunits: RnfA, RnfB, RnfC, RnfD, RnfE and RnfG.</text>
</comment>
<comment type="subcellular location">
    <subcellularLocation>
        <location evidence="1">Cell inner membrane</location>
        <topology evidence="1">Peripheral membrane protein</topology>
    </subcellularLocation>
</comment>
<comment type="similarity">
    <text evidence="1">Belongs to the 4Fe4S bacterial-type ferredoxin family. RnfC subfamily.</text>
</comment>
<sequence>MFKLFTARQHDKIWDFDGGIHPPEMKLQSSTVPMRIAPLPDQLIIPLQQHLGPEGELRVRAGEQVLKGQPLTVGRGRTVPVHAPTSGMITAIAPHTTAHPSGLAELCVHITPDGEDRWREQQPWADYRQRDKMALLDRIHQAGIAGLGGAGFPTASKLQGGLNGIITLIINAAECEPYITADDRLMQEHADEVITGIHILRHLLQPQQVLIGIEDNKPEAIAALQRALRGQDDIHLRVVPTKYPSGGAKQLTKILTGKEVPFGKHSSSIGVLMQNVGTVVAIKRAVIDDEPLIERVVTLTGDALSSPGNFWARIGTPVLYLLKLAGFKPQNPPMVIMGGPLMGFTLPSLDVPIVKISNCILAPAETEMGLSEPEQSCIRCGLCVDACPAGLLPQQLYWFSRGEEHEKARNHNLFDCIECGACAYVCPSNIPLVQYYRQEKAEIRALDQESARAAEAKARFEAKQARLAREKLARELRHKQAAVKLTDADQQTVDAAVSRLTRQSDGSESVINIPAGQMPDNSAVIAAREARKAQARARQAEKQQARSTEETTDIVDPRQAAVAAAIARVKAKKAAQVQHVTTDVAEAGSEAIAEDPRKAAVAAAIARVKAKKAAQVQHVTTDVAEAGSEAMAEDPRKAAVAAAIARVKAKKAAQAINPD</sequence>
<evidence type="ECO:0000255" key="1">
    <source>
        <dbReference type="HAMAP-Rule" id="MF_00461"/>
    </source>
</evidence>
<keyword id="KW-0004">4Fe-4S</keyword>
<keyword id="KW-0997">Cell inner membrane</keyword>
<keyword id="KW-1003">Cell membrane</keyword>
<keyword id="KW-0249">Electron transport</keyword>
<keyword id="KW-0408">Iron</keyword>
<keyword id="KW-0411">Iron-sulfur</keyword>
<keyword id="KW-0472">Membrane</keyword>
<keyword id="KW-0479">Metal-binding</keyword>
<keyword id="KW-0677">Repeat</keyword>
<keyword id="KW-1278">Translocase</keyword>
<keyword id="KW-0813">Transport</keyword>
<organism>
    <name type="scientific">Yersinia pseudotuberculosis serotype IB (strain PB1/+)</name>
    <dbReference type="NCBI Taxonomy" id="502801"/>
    <lineage>
        <taxon>Bacteria</taxon>
        <taxon>Pseudomonadati</taxon>
        <taxon>Pseudomonadota</taxon>
        <taxon>Gammaproteobacteria</taxon>
        <taxon>Enterobacterales</taxon>
        <taxon>Yersiniaceae</taxon>
        <taxon>Yersinia</taxon>
    </lineage>
</organism>